<comment type="function">
    <text evidence="2">Involved in mRNA degradation. Hydrolyzes single-stranded polyribonucleotides processively in the 3' to 5' direction.</text>
</comment>
<comment type="catalytic activity">
    <reaction evidence="2">
        <text>Exonucleolytic cleavage in the 3'- to 5'-direction to yield nucleoside 5'-phosphates.</text>
        <dbReference type="EC" id="3.1.13.1"/>
    </reaction>
</comment>
<comment type="subcellular location">
    <subcellularLocation>
        <location evidence="2">Cytoplasm</location>
    </subcellularLocation>
</comment>
<comment type="similarity">
    <text evidence="2">Belongs to the RNR ribonuclease family. RNase II subfamily.</text>
</comment>
<protein>
    <recommendedName>
        <fullName evidence="2">Exoribonuclease 2</fullName>
        <ecNumber evidence="2">3.1.13.1</ecNumber>
    </recommendedName>
    <alternativeName>
        <fullName evidence="2">Exoribonuclease II</fullName>
        <shortName evidence="2">RNase II</shortName>
        <shortName evidence="2">Ribonuclease II</shortName>
    </alternativeName>
</protein>
<gene>
    <name evidence="2" type="primary">rnb</name>
    <name type="ordered locus">ETA_16280</name>
</gene>
<accession>B2VKS8</accession>
<evidence type="ECO:0000255" key="1"/>
<evidence type="ECO:0000255" key="2">
    <source>
        <dbReference type="HAMAP-Rule" id="MF_01036"/>
    </source>
</evidence>
<dbReference type="EC" id="3.1.13.1" evidence="2"/>
<dbReference type="EMBL" id="CU468135">
    <property type="protein sequence ID" value="CAO96674.1"/>
    <property type="molecule type" value="Genomic_DNA"/>
</dbReference>
<dbReference type="RefSeq" id="WP_012441367.1">
    <property type="nucleotide sequence ID" value="NC_010694.1"/>
</dbReference>
<dbReference type="SMR" id="B2VKS8"/>
<dbReference type="STRING" id="465817.ETA_16280"/>
<dbReference type="KEGG" id="eta:ETA_16280"/>
<dbReference type="eggNOG" id="COG4776">
    <property type="taxonomic scope" value="Bacteria"/>
</dbReference>
<dbReference type="HOGENOM" id="CLU_002333_7_3_6"/>
<dbReference type="OrthoDB" id="9764149at2"/>
<dbReference type="Proteomes" id="UP000001726">
    <property type="component" value="Chromosome"/>
</dbReference>
<dbReference type="GO" id="GO:0005829">
    <property type="term" value="C:cytosol"/>
    <property type="evidence" value="ECO:0007669"/>
    <property type="project" value="TreeGrafter"/>
</dbReference>
<dbReference type="GO" id="GO:0008859">
    <property type="term" value="F:exoribonuclease II activity"/>
    <property type="evidence" value="ECO:0007669"/>
    <property type="project" value="UniProtKB-UniRule"/>
</dbReference>
<dbReference type="GO" id="GO:0003723">
    <property type="term" value="F:RNA binding"/>
    <property type="evidence" value="ECO:0007669"/>
    <property type="project" value="UniProtKB-KW"/>
</dbReference>
<dbReference type="GO" id="GO:0006402">
    <property type="term" value="P:mRNA catabolic process"/>
    <property type="evidence" value="ECO:0007669"/>
    <property type="project" value="UniProtKB-UniRule"/>
</dbReference>
<dbReference type="FunFam" id="2.40.50.140:FF:000079">
    <property type="entry name" value="Exoribonuclease 2"/>
    <property type="match status" value="1"/>
</dbReference>
<dbReference type="Gene3D" id="2.40.50.640">
    <property type="match status" value="1"/>
</dbReference>
<dbReference type="Gene3D" id="2.40.50.140">
    <property type="entry name" value="Nucleic acid-binding proteins"/>
    <property type="match status" value="2"/>
</dbReference>
<dbReference type="HAMAP" id="MF_01036">
    <property type="entry name" value="RNase_II"/>
    <property type="match status" value="1"/>
</dbReference>
<dbReference type="InterPro" id="IPR011129">
    <property type="entry name" value="CSD"/>
</dbReference>
<dbReference type="InterPro" id="IPR012340">
    <property type="entry name" value="NA-bd_OB-fold"/>
</dbReference>
<dbReference type="InterPro" id="IPR013223">
    <property type="entry name" value="RNase_B_OB_dom"/>
</dbReference>
<dbReference type="InterPro" id="IPR011804">
    <property type="entry name" value="RNase_II"/>
</dbReference>
<dbReference type="InterPro" id="IPR001900">
    <property type="entry name" value="RNase_II/R"/>
</dbReference>
<dbReference type="InterPro" id="IPR022966">
    <property type="entry name" value="RNase_II/R_CS"/>
</dbReference>
<dbReference type="InterPro" id="IPR004476">
    <property type="entry name" value="RNase_II/RNase_R"/>
</dbReference>
<dbReference type="InterPro" id="IPR050180">
    <property type="entry name" value="RNR_Ribonuclease"/>
</dbReference>
<dbReference type="InterPro" id="IPR003029">
    <property type="entry name" value="S1_domain"/>
</dbReference>
<dbReference type="NCBIfam" id="TIGR00358">
    <property type="entry name" value="3_prime_RNase"/>
    <property type="match status" value="1"/>
</dbReference>
<dbReference type="NCBIfam" id="NF003455">
    <property type="entry name" value="PRK05054.1"/>
    <property type="match status" value="1"/>
</dbReference>
<dbReference type="NCBIfam" id="TIGR02062">
    <property type="entry name" value="RNase_B"/>
    <property type="match status" value="1"/>
</dbReference>
<dbReference type="PANTHER" id="PTHR23355:SF37">
    <property type="entry name" value="EXORIBONUCLEASE 2"/>
    <property type="match status" value="1"/>
</dbReference>
<dbReference type="PANTHER" id="PTHR23355">
    <property type="entry name" value="RIBONUCLEASE"/>
    <property type="match status" value="1"/>
</dbReference>
<dbReference type="Pfam" id="PF08206">
    <property type="entry name" value="OB_RNB"/>
    <property type="match status" value="1"/>
</dbReference>
<dbReference type="Pfam" id="PF00773">
    <property type="entry name" value="RNB"/>
    <property type="match status" value="1"/>
</dbReference>
<dbReference type="Pfam" id="PF00575">
    <property type="entry name" value="S1"/>
    <property type="match status" value="1"/>
</dbReference>
<dbReference type="SMART" id="SM00357">
    <property type="entry name" value="CSP"/>
    <property type="match status" value="1"/>
</dbReference>
<dbReference type="SMART" id="SM00955">
    <property type="entry name" value="RNB"/>
    <property type="match status" value="1"/>
</dbReference>
<dbReference type="SUPFAM" id="SSF50249">
    <property type="entry name" value="Nucleic acid-binding proteins"/>
    <property type="match status" value="4"/>
</dbReference>
<dbReference type="PROSITE" id="PS01175">
    <property type="entry name" value="RIBONUCLEASE_II"/>
    <property type="match status" value="1"/>
</dbReference>
<organism>
    <name type="scientific">Erwinia tasmaniensis (strain DSM 17950 / CFBP 7177 / CIP 109463 / NCPPB 4357 / Et1/99)</name>
    <dbReference type="NCBI Taxonomy" id="465817"/>
    <lineage>
        <taxon>Bacteria</taxon>
        <taxon>Pseudomonadati</taxon>
        <taxon>Pseudomonadota</taxon>
        <taxon>Gammaproteobacteria</taxon>
        <taxon>Enterobacterales</taxon>
        <taxon>Erwiniaceae</taxon>
        <taxon>Erwinia</taxon>
    </lineage>
</organism>
<feature type="chain" id="PRO_1000135869" description="Exoribonuclease 2">
    <location>
        <begin position="1"/>
        <end position="647"/>
    </location>
</feature>
<feature type="domain" description="RNB" evidence="1">
    <location>
        <begin position="190"/>
        <end position="519"/>
    </location>
</feature>
<feature type="domain" description="S1 motif" evidence="2">
    <location>
        <begin position="564"/>
        <end position="646"/>
    </location>
</feature>
<keyword id="KW-0963">Cytoplasm</keyword>
<keyword id="KW-0269">Exonuclease</keyword>
<keyword id="KW-0378">Hydrolase</keyword>
<keyword id="KW-0540">Nuclease</keyword>
<keyword id="KW-1185">Reference proteome</keyword>
<keyword id="KW-0694">RNA-binding</keyword>
<name>RNB_ERWT9</name>
<sequence length="647" mass="72686">MFQDNPLLAQLKEKLHSQTPRVEGVVKGTEKGFGFLEVDAQKSYFIPPPFMKKVMHGDRVSAVIQSDKDREVADPETLIEPFLTRFVGRVQKKDDRLSIIPDHPLLKDAIQCRPERSVKHDFQAGDWAVAEMRRHPLKGDRTFYAELTEFITTAEDHLAPWWVTLSRHNLEREAPDVTTPQSMLDEQLEREDLTSLPFVTIDSASTEDMDDALYVEDAGNGALKLIVAIADPTAYVPVGSKLDAVAAERAFTNYLPGFNIPMLPRQLSDDICSLRPHERRPVLACRITLAADGTPADDVQFFAAWIESHAKLAYNDVSDWLETGGSSAWQPENEAIANQIRLLNRLCLARSEWRQAHALVFKDRPDFRFLLGEKGEVLDIIAEHRRIANRIVEESMILANICAATVLRDRLGFGIYNVHLGFDEANAEQAAAVLANHGVTADPLAIATLEGFRNLRRELDALPTQFLDSRIRRFQSFAEVSTTPGPHFGLGLEAYATWTSPIRKYGDMVNHRLLKAIIKGEQSARPADELSLKMAERRRQNRMAERDVGDWLYSRFLQKAAGSEQRFSAEVIDVSRGGMRVRLQENGAVAFIPAPFIHAVRDEMVCSNENGSVQIKGEVAYRVTDLIEVTIAEVRMETRSIVARPVA</sequence>
<proteinExistence type="inferred from homology"/>
<reference key="1">
    <citation type="journal article" date="2008" name="Environ. Microbiol.">
        <title>The genome of Erwinia tasmaniensis strain Et1/99, a non-pathogenic bacterium in the genus Erwinia.</title>
        <authorList>
            <person name="Kube M."/>
            <person name="Migdoll A.M."/>
            <person name="Mueller I."/>
            <person name="Kuhl H."/>
            <person name="Beck A."/>
            <person name="Reinhardt R."/>
            <person name="Geider K."/>
        </authorList>
    </citation>
    <scope>NUCLEOTIDE SEQUENCE [LARGE SCALE GENOMIC DNA]</scope>
    <source>
        <strain>DSM 17950 / CFBP 7177 / CIP 109463 / NCPPB 4357 / Et1/99</strain>
    </source>
</reference>